<name>GRHL1_MOUSE</name>
<dbReference type="EMBL" id="AF411211">
    <property type="protein sequence ID" value="AAM22617.1"/>
    <property type="molecule type" value="mRNA"/>
</dbReference>
<dbReference type="EMBL" id="AF411212">
    <property type="protein sequence ID" value="AAM22618.1"/>
    <property type="molecule type" value="mRNA"/>
</dbReference>
<dbReference type="EMBL" id="AK161048">
    <property type="protein sequence ID" value="BAE36170.1"/>
    <property type="molecule type" value="mRNA"/>
</dbReference>
<dbReference type="EMBL" id="BC013080">
    <property type="protein sequence ID" value="AAH13080.1"/>
    <property type="molecule type" value="mRNA"/>
</dbReference>
<dbReference type="EMBL" id="BC037233">
    <property type="protein sequence ID" value="AAH37233.1"/>
    <property type="molecule type" value="mRNA"/>
</dbReference>
<dbReference type="CCDS" id="CCDS36420.1">
    <molecule id="Q921D9-2"/>
</dbReference>
<dbReference type="CCDS" id="CCDS49038.1">
    <molecule id="Q921D9-1"/>
</dbReference>
<dbReference type="RefSeq" id="NP_001154878.1">
    <molecule id="Q921D9-1"/>
    <property type="nucleotide sequence ID" value="NM_001161406.1"/>
</dbReference>
<dbReference type="SMR" id="Q921D9"/>
<dbReference type="FunCoup" id="Q921D9">
    <property type="interactions" value="2357"/>
</dbReference>
<dbReference type="STRING" id="10090.ENSMUSP00000082689"/>
<dbReference type="GlyGen" id="Q921D9">
    <property type="glycosylation" value="2 sites, 1 O-linked glycan (2 sites)"/>
</dbReference>
<dbReference type="iPTMnet" id="Q921D9"/>
<dbReference type="PhosphoSitePlus" id="Q921D9"/>
<dbReference type="PaxDb" id="10090-ENSMUSP00000082689"/>
<dbReference type="ProteomicsDB" id="271160">
    <molecule id="Q921D9-1"/>
</dbReference>
<dbReference type="ProteomicsDB" id="271161">
    <molecule id="Q921D9-2"/>
</dbReference>
<dbReference type="Antibodypedia" id="1788">
    <property type="antibodies" value="117 antibodies from 23 providers"/>
</dbReference>
<dbReference type="DNASU" id="195733"/>
<dbReference type="Ensembl" id="ENSMUST00000085553.13">
    <molecule id="Q921D9-1"/>
    <property type="protein sequence ID" value="ENSMUSP00000082689.6"/>
    <property type="gene ID" value="ENSMUSG00000020656.17"/>
</dbReference>
<dbReference type="GeneID" id="195733"/>
<dbReference type="KEGG" id="mmu:195733"/>
<dbReference type="UCSC" id="uc007nem.2">
    <molecule id="Q921D9-1"/>
    <property type="organism name" value="mouse"/>
</dbReference>
<dbReference type="AGR" id="MGI:2182540"/>
<dbReference type="CTD" id="29841"/>
<dbReference type="MGI" id="MGI:2182540">
    <property type="gene designation" value="Grhl1"/>
</dbReference>
<dbReference type="VEuPathDB" id="HostDB:ENSMUSG00000020656"/>
<dbReference type="eggNOG" id="KOG4091">
    <property type="taxonomic scope" value="Eukaryota"/>
</dbReference>
<dbReference type="GeneTree" id="ENSGT00940000157612"/>
<dbReference type="HOGENOM" id="CLU_021156_1_1_1"/>
<dbReference type="InParanoid" id="Q921D9"/>
<dbReference type="OMA" id="IQPHGFT"/>
<dbReference type="OrthoDB" id="7680836at2759"/>
<dbReference type="PhylomeDB" id="Q921D9"/>
<dbReference type="TreeFam" id="TF314132"/>
<dbReference type="BioGRID-ORCS" id="195733">
    <property type="hits" value="3 hits in 81 CRISPR screens"/>
</dbReference>
<dbReference type="ChiTaRS" id="Grhl1">
    <property type="organism name" value="mouse"/>
</dbReference>
<dbReference type="PRO" id="PR:Q921D9"/>
<dbReference type="Proteomes" id="UP000000589">
    <property type="component" value="Chromosome 12"/>
</dbReference>
<dbReference type="RNAct" id="Q921D9">
    <property type="molecule type" value="protein"/>
</dbReference>
<dbReference type="Bgee" id="ENSMUSG00000020656">
    <property type="expression patterns" value="Expressed in hair follicle and 167 other cell types or tissues"/>
</dbReference>
<dbReference type="ExpressionAtlas" id="Q921D9">
    <property type="expression patterns" value="baseline and differential"/>
</dbReference>
<dbReference type="GO" id="GO:0005654">
    <property type="term" value="C:nucleoplasm"/>
    <property type="evidence" value="ECO:0007669"/>
    <property type="project" value="Ensembl"/>
</dbReference>
<dbReference type="GO" id="GO:0005634">
    <property type="term" value="C:nucleus"/>
    <property type="evidence" value="ECO:0000314"/>
    <property type="project" value="UniProtKB"/>
</dbReference>
<dbReference type="GO" id="GO:0031490">
    <property type="term" value="F:chromatin DNA binding"/>
    <property type="evidence" value="ECO:0000250"/>
    <property type="project" value="UniProtKB"/>
</dbReference>
<dbReference type="GO" id="GO:0001228">
    <property type="term" value="F:DNA-binding transcription activator activity, RNA polymerase II-specific"/>
    <property type="evidence" value="ECO:0000250"/>
    <property type="project" value="UniProtKB"/>
</dbReference>
<dbReference type="GO" id="GO:0003700">
    <property type="term" value="F:DNA-binding transcription factor activity"/>
    <property type="evidence" value="ECO:0000247"/>
    <property type="project" value="MGI"/>
</dbReference>
<dbReference type="GO" id="GO:0140297">
    <property type="term" value="F:DNA-binding transcription factor binding"/>
    <property type="evidence" value="ECO:0007669"/>
    <property type="project" value="Ensembl"/>
</dbReference>
<dbReference type="GO" id="GO:0042803">
    <property type="term" value="F:protein homodimerization activity"/>
    <property type="evidence" value="ECO:0007669"/>
    <property type="project" value="Ensembl"/>
</dbReference>
<dbReference type="GO" id="GO:0000978">
    <property type="term" value="F:RNA polymerase II cis-regulatory region sequence-specific DNA binding"/>
    <property type="evidence" value="ECO:0007669"/>
    <property type="project" value="Ensembl"/>
</dbReference>
<dbReference type="GO" id="GO:0043565">
    <property type="term" value="F:sequence-specific DNA binding"/>
    <property type="evidence" value="ECO:0000314"/>
    <property type="project" value="UniProtKB"/>
</dbReference>
<dbReference type="GO" id="GO:0000976">
    <property type="term" value="F:transcription cis-regulatory region binding"/>
    <property type="evidence" value="ECO:0000314"/>
    <property type="project" value="UniProtKB"/>
</dbReference>
<dbReference type="GO" id="GO:0002934">
    <property type="term" value="P:desmosome organization"/>
    <property type="evidence" value="ECO:0000315"/>
    <property type="project" value="MGI"/>
</dbReference>
<dbReference type="GO" id="GO:0008544">
    <property type="term" value="P:epidermis development"/>
    <property type="evidence" value="ECO:0000314"/>
    <property type="project" value="UniProtKB"/>
</dbReference>
<dbReference type="GO" id="GO:0061436">
    <property type="term" value="P:establishment of skin barrier"/>
    <property type="evidence" value="ECO:0000315"/>
    <property type="project" value="MGI"/>
</dbReference>
<dbReference type="GO" id="GO:0045944">
    <property type="term" value="P:positive regulation of transcription by RNA polymerase II"/>
    <property type="evidence" value="ECO:0000250"/>
    <property type="project" value="UniProtKB"/>
</dbReference>
<dbReference type="GO" id="GO:0006355">
    <property type="term" value="P:regulation of DNA-templated transcription"/>
    <property type="evidence" value="ECO:0000247"/>
    <property type="project" value="MGI"/>
</dbReference>
<dbReference type="GO" id="GO:0045616">
    <property type="term" value="P:regulation of keratinocyte differentiation"/>
    <property type="evidence" value="ECO:0000315"/>
    <property type="project" value="MGI"/>
</dbReference>
<dbReference type="InterPro" id="IPR007604">
    <property type="entry name" value="CP2"/>
</dbReference>
<dbReference type="InterPro" id="IPR040167">
    <property type="entry name" value="TF_CP2-like"/>
</dbReference>
<dbReference type="PANTHER" id="PTHR11037:SF16">
    <property type="entry name" value="GRAINYHEAD-LIKE PROTEIN 1 HOMOLOG"/>
    <property type="match status" value="1"/>
</dbReference>
<dbReference type="PANTHER" id="PTHR11037">
    <property type="entry name" value="TRANSCRIPTION FACTOR CP2"/>
    <property type="match status" value="1"/>
</dbReference>
<dbReference type="Pfam" id="PF04516">
    <property type="entry name" value="CP2"/>
    <property type="match status" value="1"/>
</dbReference>
<dbReference type="Pfam" id="PF25416">
    <property type="entry name" value="GRHL1_C"/>
    <property type="match status" value="1"/>
</dbReference>
<dbReference type="PROSITE" id="PS51968">
    <property type="entry name" value="GRH_CP2_DB"/>
    <property type="match status" value="1"/>
</dbReference>
<evidence type="ECO:0000250" key="1">
    <source>
        <dbReference type="UniProtKB" id="Q8K5C0"/>
    </source>
</evidence>
<evidence type="ECO:0000250" key="2">
    <source>
        <dbReference type="UniProtKB" id="Q9NZI5"/>
    </source>
</evidence>
<evidence type="ECO:0000255" key="3">
    <source>
        <dbReference type="PROSITE-ProRule" id="PRU01313"/>
    </source>
</evidence>
<evidence type="ECO:0000256" key="4">
    <source>
        <dbReference type="SAM" id="MobiDB-lite"/>
    </source>
</evidence>
<evidence type="ECO:0000269" key="5">
    <source>
    </source>
</evidence>
<evidence type="ECO:0000269" key="6">
    <source>
    </source>
</evidence>
<evidence type="ECO:0000269" key="7">
    <source>
    </source>
</evidence>
<evidence type="ECO:0000269" key="8">
    <source>
    </source>
</evidence>
<evidence type="ECO:0000269" key="9">
    <source>
    </source>
</evidence>
<evidence type="ECO:0000303" key="10">
    <source>
    </source>
</evidence>
<evidence type="ECO:0000305" key="11"/>
<evidence type="ECO:0000305" key="12">
    <source>
    </source>
</evidence>
<evidence type="ECO:0000312" key="13">
    <source>
        <dbReference type="MGI" id="MGI:2182540"/>
    </source>
</evidence>
<gene>
    <name evidence="13" type="primary">Grhl1</name>
    <name type="synonym">Mgr</name>
    <name type="synonym">Tcfcp2l2</name>
</gene>
<comment type="function">
    <text evidence="6 7 8 9">Transcription factor involved in epithelial development. Binds directly to the consensus DNA sequence 5'-AACCGGTT-3' (PubMed:18288204, PubMed:21081122). Important regulator of DSG1 in the context of hair anchorage and epidermal differentiation, participates in the maintenance of the skin barrier (PubMed:18288204, PubMed:24586629). There is no genetic interaction with GRHL3, nor functional cooperativity due to diverse target gene selectivity during epithelia development (PubMed:21081122). May play a role in regulating glucose homeostasis and insulin signaling.</text>
</comment>
<comment type="subunit">
    <text evidence="2">Binds DNA as homodimer. Homodimer, also forms heterodimers with GRHL2 or GRHL3.</text>
</comment>
<comment type="subcellular location">
    <subcellularLocation>
        <location evidence="6">Nucleus</location>
    </subcellularLocation>
</comment>
<comment type="alternative products">
    <event type="alternative splicing"/>
    <isoform>
        <id>Q921D9-1</id>
        <name>1</name>
        <name>p70 Mgr</name>
        <sequence type="displayed"/>
    </isoform>
    <isoform>
        <id>Q921D9-2</id>
        <name>2</name>
        <name>p61 Mgr</name>
        <sequence type="described" ref="VSP_017641 VSP_017640"/>
    </isoform>
</comment>
<comment type="tissue specificity">
    <text evidence="5 6">Isoform 1 is highly expressed in brain, pancreas, tonsil, placenta and kidney. Isoform 2 is highly expressed in brain and liver. Expression in the skin is confined to the suprabasal layers of the epidermis and to the hair follicles.</text>
</comment>
<comment type="developmental stage">
    <text evidence="5 6">At 15.5 dpc isoform 1 is expressed predominantly in the skin and in the developing hair germ, isoform 2 is expressed predominantly in the epidermis.</text>
</comment>
<comment type="PTM">
    <text evidence="2">Methylation at Arg-9 and Lys-116 may be involved in regulating transcriptional activation.</text>
</comment>
<comment type="disruption phenotype">
    <text evidence="6 7 8">Mutants are healthy and fertile, but display an initial delay in coat growth, with older mice exhibiting hair loss as a result of poor anchoring or the hair shaft in the follicle. They show reduced numbers of abnormal desmosomes in the interfollicular epidermis. Develop palmoplantar keratoderma (PubMed:21081122). They also exhibit mild chronic skin barrier defects with altered keratinocyte terminal differentiation, increased expression of inflammatory markers and infiltration of the skin by immune cells.</text>
</comment>
<comment type="miscellaneous">
    <text evidence="12">GRHL genes (GRHL1, GRHL2 and GRHL3) show a paradoxical lack of redundancy despite their extensive sequence identity in the DNA-binding and protein dimerization domains and the fact that the core consensus DNA binding sites are identical. They have related but remarkably different functions during embryogenesis because of their differential spatiotemporal expression patterns during development.</text>
</comment>
<comment type="similarity">
    <text evidence="11">Belongs to the grh/CP2 family. Grainyhead subfamily.</text>
</comment>
<reference key="1">
    <citation type="journal article" date="2002" name="Mech. Dev.">
        <title>A highly conserved novel family of mammalian developmental transcription factors related to Drosophila grainyhead.</title>
        <authorList>
            <person name="Wilanowski T."/>
            <person name="Tuckfield A."/>
            <person name="Cerruti L."/>
            <person name="O'Connell S."/>
            <person name="Saint R."/>
            <person name="Parekh V."/>
            <person name="Tao J."/>
            <person name="Cunningham J.M."/>
            <person name="Jane S.M."/>
        </authorList>
    </citation>
    <scope>NUCLEOTIDE SEQUENCE [MRNA] (ISOFORMS 1 AND 2)</scope>
    <scope>TISSUE SPECIFICITY</scope>
    <scope>DEVELOPMENTAL STAGE</scope>
</reference>
<reference key="2">
    <citation type="journal article" date="2005" name="Science">
        <title>The transcriptional landscape of the mammalian genome.</title>
        <authorList>
            <person name="Carninci P."/>
            <person name="Kasukawa T."/>
            <person name="Katayama S."/>
            <person name="Gough J."/>
            <person name="Frith M.C."/>
            <person name="Maeda N."/>
            <person name="Oyama R."/>
            <person name="Ravasi T."/>
            <person name="Lenhard B."/>
            <person name="Wells C."/>
            <person name="Kodzius R."/>
            <person name="Shimokawa K."/>
            <person name="Bajic V.B."/>
            <person name="Brenner S.E."/>
            <person name="Batalov S."/>
            <person name="Forrest A.R."/>
            <person name="Zavolan M."/>
            <person name="Davis M.J."/>
            <person name="Wilming L.G."/>
            <person name="Aidinis V."/>
            <person name="Allen J.E."/>
            <person name="Ambesi-Impiombato A."/>
            <person name="Apweiler R."/>
            <person name="Aturaliya R.N."/>
            <person name="Bailey T.L."/>
            <person name="Bansal M."/>
            <person name="Baxter L."/>
            <person name="Beisel K.W."/>
            <person name="Bersano T."/>
            <person name="Bono H."/>
            <person name="Chalk A.M."/>
            <person name="Chiu K.P."/>
            <person name="Choudhary V."/>
            <person name="Christoffels A."/>
            <person name="Clutterbuck D.R."/>
            <person name="Crowe M.L."/>
            <person name="Dalla E."/>
            <person name="Dalrymple B.P."/>
            <person name="de Bono B."/>
            <person name="Della Gatta G."/>
            <person name="di Bernardo D."/>
            <person name="Down T."/>
            <person name="Engstrom P."/>
            <person name="Fagiolini M."/>
            <person name="Faulkner G."/>
            <person name="Fletcher C.F."/>
            <person name="Fukushima T."/>
            <person name="Furuno M."/>
            <person name="Futaki S."/>
            <person name="Gariboldi M."/>
            <person name="Georgii-Hemming P."/>
            <person name="Gingeras T.R."/>
            <person name="Gojobori T."/>
            <person name="Green R.E."/>
            <person name="Gustincich S."/>
            <person name="Harbers M."/>
            <person name="Hayashi Y."/>
            <person name="Hensch T.K."/>
            <person name="Hirokawa N."/>
            <person name="Hill D."/>
            <person name="Huminiecki L."/>
            <person name="Iacono M."/>
            <person name="Ikeo K."/>
            <person name="Iwama A."/>
            <person name="Ishikawa T."/>
            <person name="Jakt M."/>
            <person name="Kanapin A."/>
            <person name="Katoh M."/>
            <person name="Kawasawa Y."/>
            <person name="Kelso J."/>
            <person name="Kitamura H."/>
            <person name="Kitano H."/>
            <person name="Kollias G."/>
            <person name="Krishnan S.P."/>
            <person name="Kruger A."/>
            <person name="Kummerfeld S.K."/>
            <person name="Kurochkin I.V."/>
            <person name="Lareau L.F."/>
            <person name="Lazarevic D."/>
            <person name="Lipovich L."/>
            <person name="Liu J."/>
            <person name="Liuni S."/>
            <person name="McWilliam S."/>
            <person name="Madan Babu M."/>
            <person name="Madera M."/>
            <person name="Marchionni L."/>
            <person name="Matsuda H."/>
            <person name="Matsuzawa S."/>
            <person name="Miki H."/>
            <person name="Mignone F."/>
            <person name="Miyake S."/>
            <person name="Morris K."/>
            <person name="Mottagui-Tabar S."/>
            <person name="Mulder N."/>
            <person name="Nakano N."/>
            <person name="Nakauchi H."/>
            <person name="Ng P."/>
            <person name="Nilsson R."/>
            <person name="Nishiguchi S."/>
            <person name="Nishikawa S."/>
            <person name="Nori F."/>
            <person name="Ohara O."/>
            <person name="Okazaki Y."/>
            <person name="Orlando V."/>
            <person name="Pang K.C."/>
            <person name="Pavan W.J."/>
            <person name="Pavesi G."/>
            <person name="Pesole G."/>
            <person name="Petrovsky N."/>
            <person name="Piazza S."/>
            <person name="Reed J."/>
            <person name="Reid J.F."/>
            <person name="Ring B.Z."/>
            <person name="Ringwald M."/>
            <person name="Rost B."/>
            <person name="Ruan Y."/>
            <person name="Salzberg S.L."/>
            <person name="Sandelin A."/>
            <person name="Schneider C."/>
            <person name="Schoenbach C."/>
            <person name="Sekiguchi K."/>
            <person name="Semple C.A."/>
            <person name="Seno S."/>
            <person name="Sessa L."/>
            <person name="Sheng Y."/>
            <person name="Shibata Y."/>
            <person name="Shimada H."/>
            <person name="Shimada K."/>
            <person name="Silva D."/>
            <person name="Sinclair B."/>
            <person name="Sperling S."/>
            <person name="Stupka E."/>
            <person name="Sugiura K."/>
            <person name="Sultana R."/>
            <person name="Takenaka Y."/>
            <person name="Taki K."/>
            <person name="Tammoja K."/>
            <person name="Tan S.L."/>
            <person name="Tang S."/>
            <person name="Taylor M.S."/>
            <person name="Tegner J."/>
            <person name="Teichmann S.A."/>
            <person name="Ueda H.R."/>
            <person name="van Nimwegen E."/>
            <person name="Verardo R."/>
            <person name="Wei C.L."/>
            <person name="Yagi K."/>
            <person name="Yamanishi H."/>
            <person name="Zabarovsky E."/>
            <person name="Zhu S."/>
            <person name="Zimmer A."/>
            <person name="Hide W."/>
            <person name="Bult C."/>
            <person name="Grimmond S.M."/>
            <person name="Teasdale R.D."/>
            <person name="Liu E.T."/>
            <person name="Brusic V."/>
            <person name="Quackenbush J."/>
            <person name="Wahlestedt C."/>
            <person name="Mattick J.S."/>
            <person name="Hume D.A."/>
            <person name="Kai C."/>
            <person name="Sasaki D."/>
            <person name="Tomaru Y."/>
            <person name="Fukuda S."/>
            <person name="Kanamori-Katayama M."/>
            <person name="Suzuki M."/>
            <person name="Aoki J."/>
            <person name="Arakawa T."/>
            <person name="Iida J."/>
            <person name="Imamura K."/>
            <person name="Itoh M."/>
            <person name="Kato T."/>
            <person name="Kawaji H."/>
            <person name="Kawagashira N."/>
            <person name="Kawashima T."/>
            <person name="Kojima M."/>
            <person name="Kondo S."/>
            <person name="Konno H."/>
            <person name="Nakano K."/>
            <person name="Ninomiya N."/>
            <person name="Nishio T."/>
            <person name="Okada M."/>
            <person name="Plessy C."/>
            <person name="Shibata K."/>
            <person name="Shiraki T."/>
            <person name="Suzuki S."/>
            <person name="Tagami M."/>
            <person name="Waki K."/>
            <person name="Watahiki A."/>
            <person name="Okamura-Oho Y."/>
            <person name="Suzuki H."/>
            <person name="Kawai J."/>
            <person name="Hayashizaki Y."/>
        </authorList>
    </citation>
    <scope>NUCLEOTIDE SEQUENCE [LARGE SCALE MRNA] (ISOFORM 1)</scope>
    <source>
        <strain>C57BL/6J</strain>
        <tissue>Skin</tissue>
    </source>
</reference>
<reference key="3">
    <citation type="journal article" date="2004" name="Genome Res.">
        <title>The status, quality, and expansion of the NIH full-length cDNA project: the Mammalian Gene Collection (MGC).</title>
        <authorList>
            <consortium name="The MGC Project Team"/>
        </authorList>
    </citation>
    <scope>NUCLEOTIDE SEQUENCE [LARGE SCALE MRNA] (ISOFORM 1)</scope>
    <source>
        <strain>FVB/N</strain>
        <tissue>Mammary tumor</tissue>
    </source>
</reference>
<reference key="4">
    <citation type="journal article" date="2008" name="EMBO J.">
        <title>Perturbed desmosomal cadherin expression in grainy head-like 1-null mice.</title>
        <authorList>
            <person name="Wilanowski T."/>
            <person name="Caddy J."/>
            <person name="Ting S.B."/>
            <person name="Hislop N.R."/>
            <person name="Cerruti L."/>
            <person name="Auden A."/>
            <person name="Zhao L.L."/>
            <person name="Asquith S."/>
            <person name="Ellis S."/>
            <person name="Sinclair R."/>
            <person name="Cunningham J.M."/>
            <person name="Jane S.M."/>
        </authorList>
    </citation>
    <scope>FUNCTION</scope>
    <scope>DISRUPTION PHENOTYPE</scope>
    <scope>SUBCELLULAR LOCATION</scope>
    <scope>DNA-BINDING</scope>
    <scope>TISSUE SPECIFICITY</scope>
    <scope>DEVELOPMENTAL STAGE</scope>
</reference>
<reference key="5">
    <citation type="journal article" date="2011" name="Dev. Biol.">
        <title>The unique and cooperative roles of the Grainy head-like transcription factors in epidermal development reflect unexpected target gene specificity.</title>
        <authorList>
            <person name="Boglev Y."/>
            <person name="Wilanowski T."/>
            <person name="Caddy J."/>
            <person name="Parekh V."/>
            <person name="Auden A."/>
            <person name="Darido C."/>
            <person name="Hislop N.R."/>
            <person name="Cangkrama M."/>
            <person name="Ting S.B."/>
            <person name="Jane S.M."/>
        </authorList>
    </citation>
    <scope>FUNCTION</scope>
    <scope>DISRUPTION PHENOTYPE</scope>
</reference>
<reference key="6">
    <citation type="journal article" date="2014" name="PLoS ONE">
        <title>Loss of Grainy head-like 1 is associated with disruption of the epidermal barrier and squamous cell carcinoma of the skin.</title>
        <authorList>
            <person name="Mlacki M."/>
            <person name="Darido C."/>
            <person name="Jane S.M."/>
            <person name="Wilanowski T."/>
        </authorList>
    </citation>
    <scope>FUNCTION</scope>
    <scope>DISRUPTION PHENOTYPE</scope>
</reference>
<reference key="7">
    <citation type="journal article" date="2023" name="EMBO J.">
        <title>C. elegans molting requires rhythmic accumulation of the Grainyhead/LSF transcription factor GRH-1.</title>
        <authorList>
            <person name="Meeuse M.W.M."/>
            <person name="Hauser Y.P."/>
            <person name="Nahar S."/>
            <person name="Smith A.A.T."/>
            <person name="Braun K."/>
            <person name="Azzi C."/>
            <person name="Rempfler M."/>
            <person name="Grosshans H."/>
        </authorList>
    </citation>
    <scope>FUNCTION</scope>
</reference>
<organism>
    <name type="scientific">Mus musculus</name>
    <name type="common">Mouse</name>
    <dbReference type="NCBI Taxonomy" id="10090"/>
    <lineage>
        <taxon>Eukaryota</taxon>
        <taxon>Metazoa</taxon>
        <taxon>Chordata</taxon>
        <taxon>Craniata</taxon>
        <taxon>Vertebrata</taxon>
        <taxon>Euteleostomi</taxon>
        <taxon>Mammalia</taxon>
        <taxon>Eutheria</taxon>
        <taxon>Euarchontoglires</taxon>
        <taxon>Glires</taxon>
        <taxon>Rodentia</taxon>
        <taxon>Myomorpha</taxon>
        <taxon>Muroidea</taxon>
        <taxon>Muridae</taxon>
        <taxon>Murinae</taxon>
        <taxon>Mus</taxon>
        <taxon>Mus</taxon>
    </lineage>
</organism>
<keyword id="KW-0010">Activator</keyword>
<keyword id="KW-0025">Alternative splicing</keyword>
<keyword id="KW-0217">Developmental protein</keyword>
<keyword id="KW-0238">DNA-binding</keyword>
<keyword id="KW-0539">Nucleus</keyword>
<keyword id="KW-0597">Phosphoprotein</keyword>
<keyword id="KW-1185">Reference proteome</keyword>
<keyword id="KW-0804">Transcription</keyword>
<keyword id="KW-0805">Transcription regulation</keyword>
<feature type="chain" id="PRO_0000227991" description="Grainyhead-like protein 1 homolog">
    <location>
        <begin position="1"/>
        <end position="618"/>
    </location>
</feature>
<feature type="domain" description="Grh/CP2 DB" evidence="3">
    <location>
        <begin position="248"/>
        <end position="474"/>
    </location>
</feature>
<feature type="region of interest" description="Transcription activation" evidence="1">
    <location>
        <begin position="1"/>
        <end position="91"/>
    </location>
</feature>
<feature type="region of interest" description="Disordered" evidence="4">
    <location>
        <begin position="76"/>
        <end position="100"/>
    </location>
</feature>
<feature type="region of interest" description="Interaction with DNA" evidence="2">
    <location>
        <begin position="380"/>
        <end position="389"/>
    </location>
</feature>
<feature type="region of interest" description="Interaction with DNA" evidence="2">
    <location>
        <begin position="427"/>
        <end position="430"/>
    </location>
</feature>
<feature type="compositionally biased region" description="Basic and acidic residues" evidence="4">
    <location>
        <begin position="76"/>
        <end position="92"/>
    </location>
</feature>
<feature type="modified residue" description="Phosphothreonine" evidence="2">
    <location>
        <position position="208"/>
    </location>
</feature>
<feature type="splice variant" id="VSP_017641" description="In isoform 2." evidence="10">
    <location>
        <begin position="1"/>
        <end position="82"/>
    </location>
</feature>
<feature type="splice variant" id="VSP_017640" description="In isoform 2." evidence="10">
    <original>GEHPEPEHSKR</original>
    <variation>MASLDDELCDL</variation>
    <location>
        <begin position="83"/>
        <end position="93"/>
    </location>
</feature>
<proteinExistence type="evidence at protein level"/>
<accession>Q921D9</accession>
<accession>Q8K5C1</accession>
<protein>
    <recommendedName>
        <fullName evidence="13">Grainyhead-like protein 1 homolog</fullName>
    </recommendedName>
    <alternativeName>
        <fullName>Transcription factor CP2-like 2</fullName>
    </alternativeName>
    <alternativeName>
        <fullName>Transcription factor LBP-32</fullName>
    </alternativeName>
</protein>
<sequence length="618" mass="70176">MTQEYDNKRPVLVLQNEALYPQRRSYTSEDEAWKSFLENPLTAATKAMMSINGDEDSAAALGLLYDYYKVPRERRSSAVKPEGEHPEPEHSKRNSIPNVTEQPLISAGENRVQVLKNVPFNIVLPHSNQLGIDKRGHLTAPDTTVTVSIATMPTHSIKTEIQPHGFAVGIPPAVYHSEPTERVVVFDRSLSTDQFSSGTQPPNAQRRTPDSTFSETFKEGVQEVFFPSELSLRMPGMNSEDYVFDNVSGNNFEYTLEASKSLRQKQGDSTMTYLNKGQFYPVTLKEGSSNEGIHHPISKVRSVIMVVFAEDKSREDQLRHWKYWHSRQHTAKQRCIDIADYKESFNTISNIEEIAYNAISFTWDINDEAKVFISVNCLSTDFSSQKGVKGLPLNIQIDTYSYNNRSNKPVHRAYCQIKVFCDKGAERKIRDEERKQSKRKVSDVKVQLLPSHKRTDITVFKPFLDLDTQPVLFIPDVHFTNLQRGSHVLSLPSEELEGEGSVLKRGPFGTEDDFGVPPPAKLTRTEEPKRVLLYVRKESEEVFDALMLKTPSLKGLMEAISDKYDVPHDKIGKIFKKCKKGILVNMDDNIVKHYSNEDTFQLQIEEAGGSYKLTLTEI</sequence>